<feature type="chain" id="PRO_1000054886" description="Small ribosomal subunit protein uS15">
    <location>
        <begin position="1"/>
        <end position="89"/>
    </location>
</feature>
<feature type="region of interest" description="Disordered" evidence="2">
    <location>
        <begin position="1"/>
        <end position="23"/>
    </location>
</feature>
<feature type="compositionally biased region" description="Basic and acidic residues" evidence="2">
    <location>
        <begin position="1"/>
        <end position="10"/>
    </location>
</feature>
<feature type="compositionally biased region" description="Polar residues" evidence="2">
    <location>
        <begin position="14"/>
        <end position="23"/>
    </location>
</feature>
<organism>
    <name type="scientific">Synechococcus sp. (strain WH7803)</name>
    <dbReference type="NCBI Taxonomy" id="32051"/>
    <lineage>
        <taxon>Bacteria</taxon>
        <taxon>Bacillati</taxon>
        <taxon>Cyanobacteriota</taxon>
        <taxon>Cyanophyceae</taxon>
        <taxon>Synechococcales</taxon>
        <taxon>Synechococcaceae</taxon>
        <taxon>Synechococcus</taxon>
    </lineage>
</organism>
<name>RS15_SYNPW</name>
<keyword id="KW-1185">Reference proteome</keyword>
<keyword id="KW-0687">Ribonucleoprotein</keyword>
<keyword id="KW-0689">Ribosomal protein</keyword>
<keyword id="KW-0694">RNA-binding</keyword>
<keyword id="KW-0699">rRNA-binding</keyword>
<reference key="1">
    <citation type="submission" date="2006-05" db="EMBL/GenBank/DDBJ databases">
        <authorList>
            <consortium name="Genoscope"/>
        </authorList>
    </citation>
    <scope>NUCLEOTIDE SEQUENCE [LARGE SCALE GENOMIC DNA]</scope>
    <source>
        <strain>WH7803</strain>
    </source>
</reference>
<evidence type="ECO:0000255" key="1">
    <source>
        <dbReference type="HAMAP-Rule" id="MF_01343"/>
    </source>
</evidence>
<evidence type="ECO:0000256" key="2">
    <source>
        <dbReference type="SAM" id="MobiDB-lite"/>
    </source>
</evidence>
<evidence type="ECO:0000305" key="3"/>
<dbReference type="EMBL" id="CT971583">
    <property type="protein sequence ID" value="CAK23495.1"/>
    <property type="molecule type" value="Genomic_DNA"/>
</dbReference>
<dbReference type="SMR" id="A5GKN0"/>
<dbReference type="STRING" id="32051.SynWH7803_1069"/>
<dbReference type="KEGG" id="syx:SynWH7803_1069"/>
<dbReference type="eggNOG" id="COG0184">
    <property type="taxonomic scope" value="Bacteria"/>
</dbReference>
<dbReference type="HOGENOM" id="CLU_148518_0_0_3"/>
<dbReference type="OrthoDB" id="9799262at2"/>
<dbReference type="Proteomes" id="UP000001566">
    <property type="component" value="Chromosome"/>
</dbReference>
<dbReference type="GO" id="GO:0022627">
    <property type="term" value="C:cytosolic small ribosomal subunit"/>
    <property type="evidence" value="ECO:0007669"/>
    <property type="project" value="TreeGrafter"/>
</dbReference>
<dbReference type="GO" id="GO:0019843">
    <property type="term" value="F:rRNA binding"/>
    <property type="evidence" value="ECO:0007669"/>
    <property type="project" value="UniProtKB-UniRule"/>
</dbReference>
<dbReference type="GO" id="GO:0003735">
    <property type="term" value="F:structural constituent of ribosome"/>
    <property type="evidence" value="ECO:0007669"/>
    <property type="project" value="InterPro"/>
</dbReference>
<dbReference type="GO" id="GO:0006412">
    <property type="term" value="P:translation"/>
    <property type="evidence" value="ECO:0007669"/>
    <property type="project" value="UniProtKB-UniRule"/>
</dbReference>
<dbReference type="CDD" id="cd00353">
    <property type="entry name" value="Ribosomal_S15p_S13e"/>
    <property type="match status" value="1"/>
</dbReference>
<dbReference type="FunFam" id="1.10.287.10:FF:000002">
    <property type="entry name" value="30S ribosomal protein S15"/>
    <property type="match status" value="1"/>
</dbReference>
<dbReference type="Gene3D" id="6.10.250.3130">
    <property type="match status" value="1"/>
</dbReference>
<dbReference type="Gene3D" id="1.10.287.10">
    <property type="entry name" value="S15/NS1, RNA-binding"/>
    <property type="match status" value="1"/>
</dbReference>
<dbReference type="HAMAP" id="MF_01343_B">
    <property type="entry name" value="Ribosomal_uS15_B"/>
    <property type="match status" value="1"/>
</dbReference>
<dbReference type="InterPro" id="IPR000589">
    <property type="entry name" value="Ribosomal_uS15"/>
</dbReference>
<dbReference type="InterPro" id="IPR005290">
    <property type="entry name" value="Ribosomal_uS15_bac-type"/>
</dbReference>
<dbReference type="InterPro" id="IPR009068">
    <property type="entry name" value="uS15_NS1_RNA-bd_sf"/>
</dbReference>
<dbReference type="NCBIfam" id="TIGR00952">
    <property type="entry name" value="S15_bact"/>
    <property type="match status" value="1"/>
</dbReference>
<dbReference type="PANTHER" id="PTHR23321">
    <property type="entry name" value="RIBOSOMAL PROTEIN S15, BACTERIAL AND ORGANELLAR"/>
    <property type="match status" value="1"/>
</dbReference>
<dbReference type="PANTHER" id="PTHR23321:SF26">
    <property type="entry name" value="SMALL RIBOSOMAL SUBUNIT PROTEIN US15M"/>
    <property type="match status" value="1"/>
</dbReference>
<dbReference type="Pfam" id="PF00312">
    <property type="entry name" value="Ribosomal_S15"/>
    <property type="match status" value="1"/>
</dbReference>
<dbReference type="SMART" id="SM01387">
    <property type="entry name" value="Ribosomal_S15"/>
    <property type="match status" value="1"/>
</dbReference>
<dbReference type="SUPFAM" id="SSF47060">
    <property type="entry name" value="S15/NS1 RNA-binding domain"/>
    <property type="match status" value="1"/>
</dbReference>
<dbReference type="PROSITE" id="PS00362">
    <property type="entry name" value="RIBOSOMAL_S15"/>
    <property type="match status" value="1"/>
</dbReference>
<gene>
    <name evidence="1" type="primary">rpsO</name>
    <name evidence="1" type="synonym">rps15</name>
    <name type="ordered locus">SynWH7803_1069</name>
</gene>
<proteinExistence type="inferred from homology"/>
<protein>
    <recommendedName>
        <fullName evidence="1">Small ribosomal subunit protein uS15</fullName>
    </recommendedName>
    <alternativeName>
        <fullName evidence="3">30S ribosomal protein S15</fullName>
    </alternativeName>
</protein>
<sequence>MSLDTTEKQELINAHQTHATDTGSAEVQVAMLTERISKLSSHLQQNIHDFSSRQGLLKMIGRRKRLLGYVRGKSEKRYSDLIAKLGIRG</sequence>
<accession>A5GKN0</accession>
<comment type="function">
    <text evidence="1">One of the primary rRNA binding proteins, it binds directly to 16S rRNA where it helps nucleate assembly of the platform of the 30S subunit by binding and bridging several RNA helices of the 16S rRNA.</text>
</comment>
<comment type="function">
    <text evidence="1">Forms an intersubunit bridge (bridge B4) with the 23S rRNA of the 50S subunit in the ribosome.</text>
</comment>
<comment type="subunit">
    <text evidence="1">Part of the 30S ribosomal subunit. Forms a bridge to the 50S subunit in the 70S ribosome, contacting the 23S rRNA.</text>
</comment>
<comment type="similarity">
    <text evidence="1">Belongs to the universal ribosomal protein uS15 family.</text>
</comment>